<organism>
    <name type="scientific">Citrus sinensis</name>
    <name type="common">Sweet orange</name>
    <name type="synonym">Citrus aurantium var. sinensis</name>
    <dbReference type="NCBI Taxonomy" id="2711"/>
    <lineage>
        <taxon>Eukaryota</taxon>
        <taxon>Viridiplantae</taxon>
        <taxon>Streptophyta</taxon>
        <taxon>Embryophyta</taxon>
        <taxon>Tracheophyta</taxon>
        <taxon>Spermatophyta</taxon>
        <taxon>Magnoliopsida</taxon>
        <taxon>eudicotyledons</taxon>
        <taxon>Gunneridae</taxon>
        <taxon>Pentapetalae</taxon>
        <taxon>rosids</taxon>
        <taxon>malvids</taxon>
        <taxon>Sapindales</taxon>
        <taxon>Rutaceae</taxon>
        <taxon>Aurantioideae</taxon>
        <taxon>Citrus</taxon>
    </lineage>
</organism>
<reference key="1">
    <citation type="journal article" date="1997" name="Plant Mol. Biol.">
        <title>Induction of a Citrus gene highly homologous to plant and yeast thi genes involved in thiamine biosynthesis during natural and ethylene-induced fruit maturation.</title>
        <authorList>
            <person name="Jacob-Wilk D."/>
            <person name="Goldschmidt E.E."/>
            <person name="Riov J."/>
            <person name="Sadka A."/>
            <person name="Holland D."/>
        </authorList>
    </citation>
    <scope>NUCLEOTIDE SEQUENCE [MRNA]</scope>
    <scope>DEVELOPMENTAL STAGE</scope>
    <source>
        <tissue>Peelings</tissue>
    </source>
</reference>
<keyword id="KW-0150">Chloroplast</keyword>
<keyword id="KW-0408">Iron</keyword>
<keyword id="KW-0479">Metal-binding</keyword>
<keyword id="KW-0520">NAD</keyword>
<keyword id="KW-0934">Plastid</keyword>
<keyword id="KW-0784">Thiamine biosynthesis</keyword>
<keyword id="KW-0808">Transferase</keyword>
<keyword id="KW-0809">Transit peptide</keyword>
<sequence>MAAMASTAFAPSVSSTTNKLFDSSFHGAPMSPSLLRLQPIKSSRPNNLSISASASPPYDLNTFKFDPIKESIVSREMTRRYMTDMITYADTDVVVVGAGSAGLSCAYELSKNPNIQIAIIEQSVSPGGGAWLGGQLFSAMVVRKPAHIFLDELGIDYDEQDNYVVIKHAALFTSTIMSKLLARPNVKLFNAVAAEDLIVKGGRVGGVVTNWALVSMNHDTQSCMDPNVMEAKVVVSSCGHDGPFGATGVKRLKSIGMIEEVPGMKALDMNSAEDAIVRLTREVVPGMIVTGMEVAEIDGAPRMGPTFGAMMISGQKAAHLALKSLGQPNALDGTYVGGVHPELILAAADSAETADA</sequence>
<feature type="transit peptide" description="Chloroplast" evidence="1">
    <location>
        <begin position="1"/>
        <end position="51"/>
    </location>
</feature>
<feature type="chain" id="PRO_0000034061" description="Thiamine thiazole synthase, chloroplastic">
    <location>
        <begin position="52"/>
        <end position="356"/>
    </location>
</feature>
<feature type="binding site" evidence="1">
    <location>
        <position position="101"/>
    </location>
    <ligand>
        <name>substrate</name>
    </ligand>
</feature>
<feature type="binding site" evidence="1">
    <location>
        <begin position="121"/>
        <end position="122"/>
    </location>
    <ligand>
        <name>substrate</name>
    </ligand>
</feature>
<feature type="binding site" evidence="1">
    <location>
        <position position="129"/>
    </location>
    <ligand>
        <name>substrate</name>
    </ligand>
</feature>
<feature type="binding site" evidence="1">
    <location>
        <position position="194"/>
    </location>
    <ligand>
        <name>substrate</name>
    </ligand>
</feature>
<feature type="binding site" evidence="1">
    <location>
        <position position="225"/>
    </location>
    <ligand>
        <name>substrate</name>
    </ligand>
</feature>
<feature type="binding site" evidence="1">
    <location>
        <position position="240"/>
    </location>
    <ligand>
        <name>substrate</name>
    </ligand>
</feature>
<feature type="binding site" evidence="1">
    <location>
        <position position="292"/>
    </location>
    <ligand>
        <name>substrate</name>
    </ligand>
</feature>
<feature type="binding site" evidence="1">
    <location>
        <begin position="302"/>
        <end position="304"/>
    </location>
    <ligand>
        <name>substrate</name>
    </ligand>
</feature>
<feature type="modified residue" description="2,3-didehydroalanine (Cys)" evidence="1">
    <location>
        <position position="223"/>
    </location>
</feature>
<proteinExistence type="evidence at transcript level"/>
<comment type="function">
    <text evidence="1">Involved in biosynthesis of the thiamine precursor thiazole. Catalyzes the conversion of NAD and glycine to adenosine diphosphate 5-(2-hydroxyethyl)-4-methylthiazole-2-carboxylic acid (ADT), an adenylated thiazole intermediate. The reaction includes an iron-dependent sulfide transfer from a conserved cysteine residue of the protein to a thiazole intermediate. The enzyme can only undergo a single turnover, which suggests it is a suicide enzyme. May have additional roles in adaptation to various stress conditions and in DNA damage tolerance.</text>
</comment>
<comment type="catalytic activity">
    <reaction evidence="1">
        <text>[ADP-thiazole synthase]-L-cysteine + glycine + NAD(+) = [ADP-thiazole synthase]-dehydroalanine + ADP-5-ethyl-4-methylthiazole-2-carboxylate + nicotinamide + 3 H2O + 2 H(+)</text>
        <dbReference type="Rhea" id="RHEA:55708"/>
        <dbReference type="Rhea" id="RHEA-COMP:14264"/>
        <dbReference type="Rhea" id="RHEA-COMP:14265"/>
        <dbReference type="ChEBI" id="CHEBI:15377"/>
        <dbReference type="ChEBI" id="CHEBI:15378"/>
        <dbReference type="ChEBI" id="CHEBI:17154"/>
        <dbReference type="ChEBI" id="CHEBI:29950"/>
        <dbReference type="ChEBI" id="CHEBI:57305"/>
        <dbReference type="ChEBI" id="CHEBI:57540"/>
        <dbReference type="ChEBI" id="CHEBI:90873"/>
        <dbReference type="ChEBI" id="CHEBI:139151"/>
        <dbReference type="EC" id="2.4.2.60"/>
    </reaction>
</comment>
<comment type="cofactor">
    <cofactor evidence="1">
        <name>Fe cation</name>
        <dbReference type="ChEBI" id="CHEBI:24875"/>
    </cofactor>
    <text evidence="1">Binds 1 Fe cation per subunit.</text>
</comment>
<comment type="subunit">
    <text evidence="1">Homooctamer.</text>
</comment>
<comment type="subcellular location">
    <subcellularLocation>
        <location evidence="1">Plastid</location>
        <location evidence="1">Chloroplast</location>
    </subcellularLocation>
</comment>
<comment type="developmental stage">
    <text evidence="2">Levels increase in fruit peel during fruit maturation.</text>
</comment>
<comment type="PTM">
    <text evidence="1">During the catalytic reaction, a sulfide is transferred from Cys-223 to a reaction intermediate, generating a dehydroalanine residue.</text>
</comment>
<comment type="similarity">
    <text evidence="1">Belongs to the THI4 family.</text>
</comment>
<gene>
    <name evidence="1" type="primary">THI1</name>
</gene>
<accession>O23787</accession>
<name>THI4_CITSI</name>
<protein>
    <recommendedName>
        <fullName evidence="1">Thiamine thiazole synthase, chloroplastic</fullName>
        <ecNumber evidence="1">2.4.2.60</ecNumber>
    </recommendedName>
    <alternativeName>
        <fullName evidence="1">Thiazole biosynthetic enzyme</fullName>
    </alternativeName>
</protein>
<dbReference type="EC" id="2.4.2.60" evidence="1"/>
<dbReference type="EMBL" id="Z82983">
    <property type="protein sequence ID" value="CAB05370.1"/>
    <property type="molecule type" value="mRNA"/>
</dbReference>
<dbReference type="PIR" id="T10474">
    <property type="entry name" value="T10474"/>
</dbReference>
<dbReference type="RefSeq" id="NP_001275783.1">
    <property type="nucleotide sequence ID" value="NM_001288854.1"/>
</dbReference>
<dbReference type="SMR" id="O23787"/>
<dbReference type="PaxDb" id="2711-XP_006475203.1"/>
<dbReference type="GeneID" id="102626594"/>
<dbReference type="KEGG" id="cit:102626594"/>
<dbReference type="eggNOG" id="KOG2960">
    <property type="taxonomic scope" value="Eukaryota"/>
</dbReference>
<dbReference type="OrthoDB" id="808049at71240"/>
<dbReference type="GO" id="GO:0009570">
    <property type="term" value="C:chloroplast stroma"/>
    <property type="evidence" value="ECO:0007669"/>
    <property type="project" value="UniProtKB-UniRule"/>
</dbReference>
<dbReference type="GO" id="GO:0005829">
    <property type="term" value="C:cytosol"/>
    <property type="evidence" value="ECO:0007669"/>
    <property type="project" value="UniProtKB-UniRule"/>
</dbReference>
<dbReference type="GO" id="GO:0160205">
    <property type="term" value="F:cysteine-dependent adenosine diphosphate thiazole synthase activity"/>
    <property type="evidence" value="ECO:0007669"/>
    <property type="project" value="UniProtKB-EC"/>
</dbReference>
<dbReference type="GO" id="GO:0005506">
    <property type="term" value="F:iron ion binding"/>
    <property type="evidence" value="ECO:0007669"/>
    <property type="project" value="UniProtKB-UniRule"/>
</dbReference>
<dbReference type="GO" id="GO:0009228">
    <property type="term" value="P:thiamine biosynthetic process"/>
    <property type="evidence" value="ECO:0007669"/>
    <property type="project" value="UniProtKB-UniRule"/>
</dbReference>
<dbReference type="GO" id="GO:0052837">
    <property type="term" value="P:thiazole biosynthetic process"/>
    <property type="evidence" value="ECO:0007669"/>
    <property type="project" value="UniProtKB-UniRule"/>
</dbReference>
<dbReference type="FunFam" id="3.50.50.60:FF:000070">
    <property type="entry name" value="Thiamine thiazole synthase, chloroplastic"/>
    <property type="match status" value="1"/>
</dbReference>
<dbReference type="Gene3D" id="6.10.250.2840">
    <property type="match status" value="1"/>
</dbReference>
<dbReference type="Gene3D" id="3.50.50.60">
    <property type="entry name" value="FAD/NAD(P)-binding domain"/>
    <property type="match status" value="1"/>
</dbReference>
<dbReference type="HAMAP" id="MF_03158">
    <property type="entry name" value="THI4"/>
    <property type="match status" value="1"/>
</dbReference>
<dbReference type="InterPro" id="IPR036188">
    <property type="entry name" value="FAD/NAD-bd_sf"/>
</dbReference>
<dbReference type="InterPro" id="IPR027495">
    <property type="entry name" value="Sti35"/>
</dbReference>
<dbReference type="InterPro" id="IPR002922">
    <property type="entry name" value="Thi4_fam"/>
</dbReference>
<dbReference type="NCBIfam" id="TIGR00292">
    <property type="entry name" value="sulfide-dependent adenosine diphosphate thiazole synthase"/>
    <property type="match status" value="1"/>
</dbReference>
<dbReference type="PANTHER" id="PTHR43422">
    <property type="entry name" value="THIAMINE THIAZOLE SYNTHASE"/>
    <property type="match status" value="1"/>
</dbReference>
<dbReference type="PANTHER" id="PTHR43422:SF3">
    <property type="entry name" value="THIAMINE THIAZOLE SYNTHASE"/>
    <property type="match status" value="1"/>
</dbReference>
<dbReference type="Pfam" id="PF01946">
    <property type="entry name" value="Thi4"/>
    <property type="match status" value="1"/>
</dbReference>
<dbReference type="SUPFAM" id="SSF51905">
    <property type="entry name" value="FAD/NAD(P)-binding domain"/>
    <property type="match status" value="1"/>
</dbReference>
<evidence type="ECO:0000255" key="1">
    <source>
        <dbReference type="HAMAP-Rule" id="MF_03158"/>
    </source>
</evidence>
<evidence type="ECO:0000269" key="2">
    <source>
    </source>
</evidence>